<sequence>MIELWPAIDLIGSTSVRLTEGKYDSEEKMSRSAEESIAYYSQFECVNRIHIVDLIGAKAQYAREFDYIKSLRRLTTKDIEVGGGIRTKSQIMDYFAAGINYCIVGTKGIQDTDWLKEMAHTFPGRIYLSVDAYGEDIKVNGWEEDTELNLFSFVRQLSDIPLGGIIYTDIAKDGKMSGPNFELTGQLVKATTIPVIASGGIRHQQDIQRLASLNVHAAIIGKAAHQASFWEGLE</sequence>
<dbReference type="EC" id="5.3.1.16" evidence="1"/>
<dbReference type="EMBL" id="CP000736">
    <property type="protein sequence ID" value="ABR53577.1"/>
    <property type="molecule type" value="Genomic_DNA"/>
</dbReference>
<dbReference type="SMR" id="A6U559"/>
<dbReference type="KEGG" id="sah:SaurJH1_2755"/>
<dbReference type="HOGENOM" id="CLU_048577_1_2_9"/>
<dbReference type="UniPathway" id="UPA00031">
    <property type="reaction ID" value="UER00009"/>
</dbReference>
<dbReference type="GO" id="GO:0005737">
    <property type="term" value="C:cytoplasm"/>
    <property type="evidence" value="ECO:0007669"/>
    <property type="project" value="UniProtKB-SubCell"/>
</dbReference>
<dbReference type="GO" id="GO:0003949">
    <property type="term" value="F:1-(5-phosphoribosyl)-5-[(5-phosphoribosylamino)methylideneamino]imidazole-4-carboxamide isomerase activity"/>
    <property type="evidence" value="ECO:0007669"/>
    <property type="project" value="UniProtKB-UniRule"/>
</dbReference>
<dbReference type="GO" id="GO:0000105">
    <property type="term" value="P:L-histidine biosynthetic process"/>
    <property type="evidence" value="ECO:0007669"/>
    <property type="project" value="UniProtKB-UniRule"/>
</dbReference>
<dbReference type="GO" id="GO:0000162">
    <property type="term" value="P:L-tryptophan biosynthetic process"/>
    <property type="evidence" value="ECO:0007669"/>
    <property type="project" value="TreeGrafter"/>
</dbReference>
<dbReference type="CDD" id="cd04732">
    <property type="entry name" value="HisA"/>
    <property type="match status" value="1"/>
</dbReference>
<dbReference type="FunFam" id="3.20.20.70:FF:000213">
    <property type="entry name" value="1-(5-phosphoribosyl)-5-[(5-phosphoribosylamino)methylideneamino] imidazole-4-carboxamide isomerase"/>
    <property type="match status" value="1"/>
</dbReference>
<dbReference type="Gene3D" id="3.20.20.70">
    <property type="entry name" value="Aldolase class I"/>
    <property type="match status" value="1"/>
</dbReference>
<dbReference type="HAMAP" id="MF_01014">
    <property type="entry name" value="HisA"/>
    <property type="match status" value="1"/>
</dbReference>
<dbReference type="InterPro" id="IPR013785">
    <property type="entry name" value="Aldolase_TIM"/>
</dbReference>
<dbReference type="InterPro" id="IPR006062">
    <property type="entry name" value="His_biosynth"/>
</dbReference>
<dbReference type="InterPro" id="IPR006063">
    <property type="entry name" value="HisA_bact_arch"/>
</dbReference>
<dbReference type="InterPro" id="IPR044524">
    <property type="entry name" value="Isoase_HisA-like"/>
</dbReference>
<dbReference type="InterPro" id="IPR023016">
    <property type="entry name" value="Isoase_HisA-like_bact"/>
</dbReference>
<dbReference type="InterPro" id="IPR011060">
    <property type="entry name" value="RibuloseP-bd_barrel"/>
</dbReference>
<dbReference type="NCBIfam" id="TIGR00007">
    <property type="entry name" value="1-(5-phosphoribosyl)-5-[(5-phosphoribosylamino)methylideneamino]imidazole-4-carboxamide isomerase"/>
    <property type="match status" value="1"/>
</dbReference>
<dbReference type="NCBIfam" id="NF010114">
    <property type="entry name" value="PRK13587.1"/>
    <property type="match status" value="1"/>
</dbReference>
<dbReference type="PANTHER" id="PTHR43090">
    <property type="entry name" value="1-(5-PHOSPHORIBOSYL)-5-[(5-PHOSPHORIBOSYLAMINO)METHYLIDENEAMINO] IMIDAZOLE-4-CARBOXAMIDE ISOMERASE"/>
    <property type="match status" value="1"/>
</dbReference>
<dbReference type="PANTHER" id="PTHR43090:SF2">
    <property type="entry name" value="1-(5-PHOSPHORIBOSYL)-5-[(5-PHOSPHORIBOSYLAMINO)METHYLIDENEAMINO] IMIDAZOLE-4-CARBOXAMIDE ISOMERASE"/>
    <property type="match status" value="1"/>
</dbReference>
<dbReference type="Pfam" id="PF00977">
    <property type="entry name" value="His_biosynth"/>
    <property type="match status" value="1"/>
</dbReference>
<dbReference type="SUPFAM" id="SSF51366">
    <property type="entry name" value="Ribulose-phoshate binding barrel"/>
    <property type="match status" value="1"/>
</dbReference>
<keyword id="KW-0028">Amino-acid biosynthesis</keyword>
<keyword id="KW-0963">Cytoplasm</keyword>
<keyword id="KW-0368">Histidine biosynthesis</keyword>
<keyword id="KW-0413">Isomerase</keyword>
<protein>
    <recommendedName>
        <fullName evidence="1">1-(5-phosphoribosyl)-5-[(5-phosphoribosylamino)methylideneamino] imidazole-4-carboxamide isomerase</fullName>
        <ecNumber evidence="1">5.3.1.16</ecNumber>
    </recommendedName>
    <alternativeName>
        <fullName evidence="1">Phosphoribosylformimino-5-aminoimidazole carboxamide ribotide isomerase</fullName>
    </alternativeName>
</protein>
<gene>
    <name evidence="1" type="primary">hisA</name>
    <name type="ordered locus">SaurJH1_2755</name>
</gene>
<evidence type="ECO:0000255" key="1">
    <source>
        <dbReference type="HAMAP-Rule" id="MF_01014"/>
    </source>
</evidence>
<organism>
    <name type="scientific">Staphylococcus aureus (strain JH1)</name>
    <dbReference type="NCBI Taxonomy" id="359787"/>
    <lineage>
        <taxon>Bacteria</taxon>
        <taxon>Bacillati</taxon>
        <taxon>Bacillota</taxon>
        <taxon>Bacilli</taxon>
        <taxon>Bacillales</taxon>
        <taxon>Staphylococcaceae</taxon>
        <taxon>Staphylococcus</taxon>
    </lineage>
</organism>
<feature type="chain" id="PRO_1000084117" description="1-(5-phosphoribosyl)-5-[(5-phosphoribosylamino)methylideneamino] imidazole-4-carboxamide isomerase">
    <location>
        <begin position="1"/>
        <end position="234"/>
    </location>
</feature>
<feature type="active site" description="Proton acceptor" evidence="1">
    <location>
        <position position="9"/>
    </location>
</feature>
<feature type="active site" description="Proton donor" evidence="1">
    <location>
        <position position="131"/>
    </location>
</feature>
<accession>A6U559</accession>
<reference key="1">
    <citation type="submission" date="2007-06" db="EMBL/GenBank/DDBJ databases">
        <title>Complete sequence of chromosome of Staphylococcus aureus subsp. aureus JH1.</title>
        <authorList>
            <consortium name="US DOE Joint Genome Institute"/>
            <person name="Copeland A."/>
            <person name="Lucas S."/>
            <person name="Lapidus A."/>
            <person name="Barry K."/>
            <person name="Detter J.C."/>
            <person name="Glavina del Rio T."/>
            <person name="Hammon N."/>
            <person name="Israni S."/>
            <person name="Dalin E."/>
            <person name="Tice H."/>
            <person name="Pitluck S."/>
            <person name="Chain P."/>
            <person name="Malfatti S."/>
            <person name="Shin M."/>
            <person name="Vergez L."/>
            <person name="Schmutz J."/>
            <person name="Larimer F."/>
            <person name="Land M."/>
            <person name="Hauser L."/>
            <person name="Kyrpides N."/>
            <person name="Ivanova N."/>
            <person name="Tomasz A."/>
            <person name="Richardson P."/>
        </authorList>
    </citation>
    <scope>NUCLEOTIDE SEQUENCE [LARGE SCALE GENOMIC DNA]</scope>
    <source>
        <strain>JH1</strain>
    </source>
</reference>
<proteinExistence type="inferred from homology"/>
<name>HIS4_STAA2</name>
<comment type="catalytic activity">
    <reaction evidence="1">
        <text>1-(5-phospho-beta-D-ribosyl)-5-[(5-phospho-beta-D-ribosylamino)methylideneamino]imidazole-4-carboxamide = 5-[(5-phospho-1-deoxy-D-ribulos-1-ylimino)methylamino]-1-(5-phospho-beta-D-ribosyl)imidazole-4-carboxamide</text>
        <dbReference type="Rhea" id="RHEA:15469"/>
        <dbReference type="ChEBI" id="CHEBI:58435"/>
        <dbReference type="ChEBI" id="CHEBI:58525"/>
        <dbReference type="EC" id="5.3.1.16"/>
    </reaction>
</comment>
<comment type="pathway">
    <text evidence="1">Amino-acid biosynthesis; L-histidine biosynthesis; L-histidine from 5-phospho-alpha-D-ribose 1-diphosphate: step 4/9.</text>
</comment>
<comment type="subcellular location">
    <subcellularLocation>
        <location evidence="1">Cytoplasm</location>
    </subcellularLocation>
</comment>
<comment type="similarity">
    <text evidence="1">Belongs to the HisA/HisF family.</text>
</comment>